<reference key="1">
    <citation type="journal article" date="2002" name="Nature">
        <title>Comparison of the genomes of two Xanthomonas pathogens with differing host specificities.</title>
        <authorList>
            <person name="da Silva A.C.R."/>
            <person name="Ferro J.A."/>
            <person name="Reinach F.C."/>
            <person name="Farah C.S."/>
            <person name="Furlan L.R."/>
            <person name="Quaggio R.B."/>
            <person name="Monteiro-Vitorello C.B."/>
            <person name="Van Sluys M.A."/>
            <person name="Almeida N.F. Jr."/>
            <person name="Alves L.M.C."/>
            <person name="do Amaral A.M."/>
            <person name="Bertolini M.C."/>
            <person name="Camargo L.E.A."/>
            <person name="Camarotte G."/>
            <person name="Cannavan F."/>
            <person name="Cardozo J."/>
            <person name="Chambergo F."/>
            <person name="Ciapina L.P."/>
            <person name="Cicarelli R.M.B."/>
            <person name="Coutinho L.L."/>
            <person name="Cursino-Santos J.R."/>
            <person name="El-Dorry H."/>
            <person name="Faria J.B."/>
            <person name="Ferreira A.J.S."/>
            <person name="Ferreira R.C.C."/>
            <person name="Ferro M.I.T."/>
            <person name="Formighieri E.F."/>
            <person name="Franco M.C."/>
            <person name="Greggio C.C."/>
            <person name="Gruber A."/>
            <person name="Katsuyama A.M."/>
            <person name="Kishi L.T."/>
            <person name="Leite R.P."/>
            <person name="Lemos E.G.M."/>
            <person name="Lemos M.V.F."/>
            <person name="Locali E.C."/>
            <person name="Machado M.A."/>
            <person name="Madeira A.M.B.N."/>
            <person name="Martinez-Rossi N.M."/>
            <person name="Martins E.C."/>
            <person name="Meidanis J."/>
            <person name="Menck C.F.M."/>
            <person name="Miyaki C.Y."/>
            <person name="Moon D.H."/>
            <person name="Moreira L.M."/>
            <person name="Novo M.T.M."/>
            <person name="Okura V.K."/>
            <person name="Oliveira M.C."/>
            <person name="Oliveira V.R."/>
            <person name="Pereira H.A."/>
            <person name="Rossi A."/>
            <person name="Sena J.A.D."/>
            <person name="Silva C."/>
            <person name="de Souza R.F."/>
            <person name="Spinola L.A.F."/>
            <person name="Takita M.A."/>
            <person name="Tamura R.E."/>
            <person name="Teixeira E.C."/>
            <person name="Tezza R.I.D."/>
            <person name="Trindade dos Santos M."/>
            <person name="Truffi D."/>
            <person name="Tsai S.M."/>
            <person name="White F.F."/>
            <person name="Setubal J.C."/>
            <person name="Kitajima J.P."/>
        </authorList>
    </citation>
    <scope>NUCLEOTIDE SEQUENCE [LARGE SCALE GENOMIC DNA]</scope>
    <source>
        <strain>ATCC 33913 / DSM 3586 / NCPPB 528 / LMG 568 / P 25</strain>
    </source>
</reference>
<sequence>MNFHEYQSKQLLAEYGIPVPAGKVASTPDEAVEVANSLGKGPWMVKAQIHAGGRGKAGGVKFCKTTDDVKAAADKMLGTKMSTYQTAGVELPVNLVLVTTAGEIVKELYLSILVDRGTKTITYIASSEGGVEIEQVAAETPELIHSLNVDFVEGVQGYHGRDFGFKLGLNAKQAGQFASIMVNLYRLFNDKDLALVEINPLAILDDGNLYALDGKFDSDDNAAFRQKALVAMRDKTQEDETEVTASELDINYVTMDGNIGCMVNGAGLAMATMDVIKLNGGEPANFLDVGGGANKQRVIEAFKLILSSDKVEGIFVNIFGGIVRCDMIAEGIIAAVKEVGVKVPVVVRLEGTNVEEGKQLLRDSGMAIIPADNINDGAKKVVEAVKNAA</sequence>
<evidence type="ECO:0000255" key="1">
    <source>
        <dbReference type="HAMAP-Rule" id="MF_00558"/>
    </source>
</evidence>
<proteinExistence type="inferred from homology"/>
<name>SUCC_XANCP</name>
<comment type="function">
    <text evidence="1">Succinyl-CoA synthetase functions in the citric acid cycle (TCA), coupling the hydrolysis of succinyl-CoA to the synthesis of either ATP or GTP and thus represents the only step of substrate-level phosphorylation in the TCA. The beta subunit provides nucleotide specificity of the enzyme and binds the substrate succinate, while the binding sites for coenzyme A and phosphate are found in the alpha subunit.</text>
</comment>
<comment type="catalytic activity">
    <reaction evidence="1">
        <text>succinate + ATP + CoA = succinyl-CoA + ADP + phosphate</text>
        <dbReference type="Rhea" id="RHEA:17661"/>
        <dbReference type="ChEBI" id="CHEBI:30031"/>
        <dbReference type="ChEBI" id="CHEBI:30616"/>
        <dbReference type="ChEBI" id="CHEBI:43474"/>
        <dbReference type="ChEBI" id="CHEBI:57287"/>
        <dbReference type="ChEBI" id="CHEBI:57292"/>
        <dbReference type="ChEBI" id="CHEBI:456216"/>
        <dbReference type="EC" id="6.2.1.5"/>
    </reaction>
    <physiologicalReaction direction="right-to-left" evidence="1">
        <dbReference type="Rhea" id="RHEA:17663"/>
    </physiologicalReaction>
</comment>
<comment type="catalytic activity">
    <reaction evidence="1">
        <text>GTP + succinate + CoA = succinyl-CoA + GDP + phosphate</text>
        <dbReference type="Rhea" id="RHEA:22120"/>
        <dbReference type="ChEBI" id="CHEBI:30031"/>
        <dbReference type="ChEBI" id="CHEBI:37565"/>
        <dbReference type="ChEBI" id="CHEBI:43474"/>
        <dbReference type="ChEBI" id="CHEBI:57287"/>
        <dbReference type="ChEBI" id="CHEBI:57292"/>
        <dbReference type="ChEBI" id="CHEBI:58189"/>
    </reaction>
    <physiologicalReaction direction="right-to-left" evidence="1">
        <dbReference type="Rhea" id="RHEA:22122"/>
    </physiologicalReaction>
</comment>
<comment type="cofactor">
    <cofactor evidence="1">
        <name>Mg(2+)</name>
        <dbReference type="ChEBI" id="CHEBI:18420"/>
    </cofactor>
    <text evidence="1">Binds 1 Mg(2+) ion per subunit.</text>
</comment>
<comment type="pathway">
    <text evidence="1">Carbohydrate metabolism; tricarboxylic acid cycle; succinate from succinyl-CoA (ligase route): step 1/1.</text>
</comment>
<comment type="subunit">
    <text evidence="1">Heterotetramer of two alpha and two beta subunits.</text>
</comment>
<comment type="similarity">
    <text evidence="1">Belongs to the succinate/malate CoA ligase beta subunit family.</text>
</comment>
<feature type="chain" id="PRO_0000102877" description="Succinate--CoA ligase [ADP-forming] subunit beta">
    <location>
        <begin position="1"/>
        <end position="389"/>
    </location>
</feature>
<feature type="domain" description="ATP-grasp" evidence="1">
    <location>
        <begin position="9"/>
        <end position="244"/>
    </location>
</feature>
<feature type="binding site" evidence="1">
    <location>
        <position position="46"/>
    </location>
    <ligand>
        <name>ATP</name>
        <dbReference type="ChEBI" id="CHEBI:30616"/>
    </ligand>
</feature>
<feature type="binding site" evidence="1">
    <location>
        <begin position="53"/>
        <end position="55"/>
    </location>
    <ligand>
        <name>ATP</name>
        <dbReference type="ChEBI" id="CHEBI:30616"/>
    </ligand>
</feature>
<feature type="binding site" evidence="1">
    <location>
        <position position="102"/>
    </location>
    <ligand>
        <name>ATP</name>
        <dbReference type="ChEBI" id="CHEBI:30616"/>
    </ligand>
</feature>
<feature type="binding site" evidence="1">
    <location>
        <position position="107"/>
    </location>
    <ligand>
        <name>ATP</name>
        <dbReference type="ChEBI" id="CHEBI:30616"/>
    </ligand>
</feature>
<feature type="binding site" evidence="1">
    <location>
        <position position="199"/>
    </location>
    <ligand>
        <name>Mg(2+)</name>
        <dbReference type="ChEBI" id="CHEBI:18420"/>
    </ligand>
</feature>
<feature type="binding site" evidence="1">
    <location>
        <position position="213"/>
    </location>
    <ligand>
        <name>Mg(2+)</name>
        <dbReference type="ChEBI" id="CHEBI:18420"/>
    </ligand>
</feature>
<feature type="binding site" evidence="1">
    <location>
        <position position="264"/>
    </location>
    <ligand>
        <name>substrate</name>
        <note>ligand shared with subunit alpha</note>
    </ligand>
</feature>
<feature type="binding site" evidence="1">
    <location>
        <begin position="321"/>
        <end position="323"/>
    </location>
    <ligand>
        <name>substrate</name>
        <note>ligand shared with subunit alpha</note>
    </ligand>
</feature>
<protein>
    <recommendedName>
        <fullName evidence="1">Succinate--CoA ligase [ADP-forming] subunit beta</fullName>
        <ecNumber evidence="1">6.2.1.5</ecNumber>
    </recommendedName>
    <alternativeName>
        <fullName evidence="1">Succinyl-CoA synthetase subunit beta</fullName>
        <shortName evidence="1">SCS-beta</shortName>
    </alternativeName>
</protein>
<dbReference type="EC" id="6.2.1.5" evidence="1"/>
<dbReference type="EMBL" id="AE008922">
    <property type="protein sequence ID" value="AAM42365.1"/>
    <property type="molecule type" value="Genomic_DNA"/>
</dbReference>
<dbReference type="RefSeq" id="NP_638441.1">
    <property type="nucleotide sequence ID" value="NC_003902.1"/>
</dbReference>
<dbReference type="RefSeq" id="WP_011038209.1">
    <property type="nucleotide sequence ID" value="NC_003902.1"/>
</dbReference>
<dbReference type="SMR" id="Q8P676"/>
<dbReference type="STRING" id="190485.XCC3094"/>
<dbReference type="EnsemblBacteria" id="AAM42365">
    <property type="protein sequence ID" value="AAM42365"/>
    <property type="gene ID" value="XCC3094"/>
</dbReference>
<dbReference type="GeneID" id="58012357"/>
<dbReference type="KEGG" id="xcc:XCC3094"/>
<dbReference type="PATRIC" id="fig|190485.4.peg.3306"/>
<dbReference type="eggNOG" id="COG0045">
    <property type="taxonomic scope" value="Bacteria"/>
</dbReference>
<dbReference type="HOGENOM" id="CLU_037430_0_2_6"/>
<dbReference type="OrthoDB" id="9802602at2"/>
<dbReference type="UniPathway" id="UPA00223">
    <property type="reaction ID" value="UER00999"/>
</dbReference>
<dbReference type="Proteomes" id="UP000001010">
    <property type="component" value="Chromosome"/>
</dbReference>
<dbReference type="GO" id="GO:0042709">
    <property type="term" value="C:succinate-CoA ligase complex"/>
    <property type="evidence" value="ECO:0000318"/>
    <property type="project" value="GO_Central"/>
</dbReference>
<dbReference type="GO" id="GO:0005524">
    <property type="term" value="F:ATP binding"/>
    <property type="evidence" value="ECO:0007669"/>
    <property type="project" value="UniProtKB-UniRule"/>
</dbReference>
<dbReference type="GO" id="GO:0000287">
    <property type="term" value="F:magnesium ion binding"/>
    <property type="evidence" value="ECO:0007669"/>
    <property type="project" value="UniProtKB-UniRule"/>
</dbReference>
<dbReference type="GO" id="GO:0004776">
    <property type="term" value="F:succinate-CoA ligase (GDP-forming) activity"/>
    <property type="evidence" value="ECO:0000318"/>
    <property type="project" value="GO_Central"/>
</dbReference>
<dbReference type="GO" id="GO:0006104">
    <property type="term" value="P:succinyl-CoA metabolic process"/>
    <property type="evidence" value="ECO:0000318"/>
    <property type="project" value="GO_Central"/>
</dbReference>
<dbReference type="GO" id="GO:0006099">
    <property type="term" value="P:tricarboxylic acid cycle"/>
    <property type="evidence" value="ECO:0000318"/>
    <property type="project" value="GO_Central"/>
</dbReference>
<dbReference type="FunFam" id="3.30.1490.20:FF:000002">
    <property type="entry name" value="Succinate--CoA ligase [ADP-forming] subunit beta"/>
    <property type="match status" value="1"/>
</dbReference>
<dbReference type="FunFam" id="3.30.470.20:FF:000002">
    <property type="entry name" value="Succinate--CoA ligase [ADP-forming] subunit beta"/>
    <property type="match status" value="1"/>
</dbReference>
<dbReference type="FunFam" id="3.40.50.261:FF:000001">
    <property type="entry name" value="Succinate--CoA ligase [ADP-forming] subunit beta"/>
    <property type="match status" value="1"/>
</dbReference>
<dbReference type="Gene3D" id="3.30.1490.20">
    <property type="entry name" value="ATP-grasp fold, A domain"/>
    <property type="match status" value="1"/>
</dbReference>
<dbReference type="Gene3D" id="3.30.470.20">
    <property type="entry name" value="ATP-grasp fold, B domain"/>
    <property type="match status" value="1"/>
</dbReference>
<dbReference type="Gene3D" id="3.40.50.261">
    <property type="entry name" value="Succinyl-CoA synthetase domains"/>
    <property type="match status" value="1"/>
</dbReference>
<dbReference type="HAMAP" id="MF_00558">
    <property type="entry name" value="Succ_CoA_beta"/>
    <property type="match status" value="1"/>
</dbReference>
<dbReference type="InterPro" id="IPR011761">
    <property type="entry name" value="ATP-grasp"/>
</dbReference>
<dbReference type="InterPro" id="IPR013650">
    <property type="entry name" value="ATP-grasp_succ-CoA_synth-type"/>
</dbReference>
<dbReference type="InterPro" id="IPR013815">
    <property type="entry name" value="ATP_grasp_subdomain_1"/>
</dbReference>
<dbReference type="InterPro" id="IPR017866">
    <property type="entry name" value="Succ-CoA_synthase_bsu_CS"/>
</dbReference>
<dbReference type="InterPro" id="IPR005811">
    <property type="entry name" value="SUCC_ACL_C"/>
</dbReference>
<dbReference type="InterPro" id="IPR005809">
    <property type="entry name" value="Succ_CoA_ligase-like_bsu"/>
</dbReference>
<dbReference type="InterPro" id="IPR016102">
    <property type="entry name" value="Succinyl-CoA_synth-like"/>
</dbReference>
<dbReference type="NCBIfam" id="NF001913">
    <property type="entry name" value="PRK00696.1"/>
    <property type="match status" value="1"/>
</dbReference>
<dbReference type="NCBIfam" id="TIGR01016">
    <property type="entry name" value="sucCoAbeta"/>
    <property type="match status" value="1"/>
</dbReference>
<dbReference type="PANTHER" id="PTHR11815:SF10">
    <property type="entry name" value="SUCCINATE--COA LIGASE [GDP-FORMING] SUBUNIT BETA, MITOCHONDRIAL"/>
    <property type="match status" value="1"/>
</dbReference>
<dbReference type="PANTHER" id="PTHR11815">
    <property type="entry name" value="SUCCINYL-COA SYNTHETASE BETA CHAIN"/>
    <property type="match status" value="1"/>
</dbReference>
<dbReference type="Pfam" id="PF08442">
    <property type="entry name" value="ATP-grasp_2"/>
    <property type="match status" value="1"/>
</dbReference>
<dbReference type="Pfam" id="PF00549">
    <property type="entry name" value="Ligase_CoA"/>
    <property type="match status" value="1"/>
</dbReference>
<dbReference type="PIRSF" id="PIRSF001554">
    <property type="entry name" value="SucCS_beta"/>
    <property type="match status" value="1"/>
</dbReference>
<dbReference type="SUPFAM" id="SSF56059">
    <property type="entry name" value="Glutathione synthetase ATP-binding domain-like"/>
    <property type="match status" value="1"/>
</dbReference>
<dbReference type="SUPFAM" id="SSF52210">
    <property type="entry name" value="Succinyl-CoA synthetase domains"/>
    <property type="match status" value="1"/>
</dbReference>
<dbReference type="PROSITE" id="PS50975">
    <property type="entry name" value="ATP_GRASP"/>
    <property type="match status" value="1"/>
</dbReference>
<dbReference type="PROSITE" id="PS01217">
    <property type="entry name" value="SUCCINYL_COA_LIG_3"/>
    <property type="match status" value="1"/>
</dbReference>
<organism>
    <name type="scientific">Xanthomonas campestris pv. campestris (strain ATCC 33913 / DSM 3586 / NCPPB 528 / LMG 568 / P 25)</name>
    <dbReference type="NCBI Taxonomy" id="190485"/>
    <lineage>
        <taxon>Bacteria</taxon>
        <taxon>Pseudomonadati</taxon>
        <taxon>Pseudomonadota</taxon>
        <taxon>Gammaproteobacteria</taxon>
        <taxon>Lysobacterales</taxon>
        <taxon>Lysobacteraceae</taxon>
        <taxon>Xanthomonas</taxon>
    </lineage>
</organism>
<gene>
    <name evidence="1" type="primary">sucC</name>
    <name type="ordered locus">XCC3094</name>
</gene>
<keyword id="KW-0067">ATP-binding</keyword>
<keyword id="KW-0436">Ligase</keyword>
<keyword id="KW-0460">Magnesium</keyword>
<keyword id="KW-0479">Metal-binding</keyword>
<keyword id="KW-0547">Nucleotide-binding</keyword>
<keyword id="KW-1185">Reference proteome</keyword>
<keyword id="KW-0816">Tricarboxylic acid cycle</keyword>
<accession>Q8P676</accession>